<dbReference type="EC" id="4.2.1.9" evidence="1"/>
<dbReference type="EMBL" id="BX640424">
    <property type="protein sequence ID" value="CAE36013.1"/>
    <property type="molecule type" value="Genomic_DNA"/>
</dbReference>
<dbReference type="SMR" id="Q7WC98"/>
<dbReference type="KEGG" id="bpa:BPP0429"/>
<dbReference type="HOGENOM" id="CLU_014271_4_2_4"/>
<dbReference type="UniPathway" id="UPA00047">
    <property type="reaction ID" value="UER00057"/>
</dbReference>
<dbReference type="UniPathway" id="UPA00049">
    <property type="reaction ID" value="UER00061"/>
</dbReference>
<dbReference type="Proteomes" id="UP000001421">
    <property type="component" value="Chromosome"/>
</dbReference>
<dbReference type="GO" id="GO:0005829">
    <property type="term" value="C:cytosol"/>
    <property type="evidence" value="ECO:0007669"/>
    <property type="project" value="TreeGrafter"/>
</dbReference>
<dbReference type="GO" id="GO:0051537">
    <property type="term" value="F:2 iron, 2 sulfur cluster binding"/>
    <property type="evidence" value="ECO:0007669"/>
    <property type="project" value="UniProtKB-UniRule"/>
</dbReference>
<dbReference type="GO" id="GO:0004160">
    <property type="term" value="F:dihydroxy-acid dehydratase activity"/>
    <property type="evidence" value="ECO:0007669"/>
    <property type="project" value="UniProtKB-UniRule"/>
</dbReference>
<dbReference type="GO" id="GO:0000287">
    <property type="term" value="F:magnesium ion binding"/>
    <property type="evidence" value="ECO:0007669"/>
    <property type="project" value="UniProtKB-UniRule"/>
</dbReference>
<dbReference type="GO" id="GO:0009097">
    <property type="term" value="P:isoleucine biosynthetic process"/>
    <property type="evidence" value="ECO:0007669"/>
    <property type="project" value="UniProtKB-UniRule"/>
</dbReference>
<dbReference type="GO" id="GO:0009099">
    <property type="term" value="P:L-valine biosynthetic process"/>
    <property type="evidence" value="ECO:0007669"/>
    <property type="project" value="UniProtKB-UniRule"/>
</dbReference>
<dbReference type="FunFam" id="3.50.30.80:FF:000001">
    <property type="entry name" value="Dihydroxy-acid dehydratase"/>
    <property type="match status" value="1"/>
</dbReference>
<dbReference type="Gene3D" id="3.50.30.80">
    <property type="entry name" value="IlvD/EDD C-terminal domain-like"/>
    <property type="match status" value="1"/>
</dbReference>
<dbReference type="HAMAP" id="MF_00012">
    <property type="entry name" value="IlvD"/>
    <property type="match status" value="1"/>
</dbReference>
<dbReference type="InterPro" id="IPR042096">
    <property type="entry name" value="Dihydro-acid_dehy_C"/>
</dbReference>
<dbReference type="InterPro" id="IPR004404">
    <property type="entry name" value="DihydroxyA_deHydtase"/>
</dbReference>
<dbReference type="InterPro" id="IPR020558">
    <property type="entry name" value="DiOHA_6PGluconate_deHydtase_CS"/>
</dbReference>
<dbReference type="InterPro" id="IPR056740">
    <property type="entry name" value="ILV_EDD_C"/>
</dbReference>
<dbReference type="InterPro" id="IPR000581">
    <property type="entry name" value="ILV_EDD_N"/>
</dbReference>
<dbReference type="InterPro" id="IPR037237">
    <property type="entry name" value="IlvD/EDD_N"/>
</dbReference>
<dbReference type="NCBIfam" id="TIGR00110">
    <property type="entry name" value="ilvD"/>
    <property type="match status" value="1"/>
</dbReference>
<dbReference type="NCBIfam" id="NF009103">
    <property type="entry name" value="PRK12448.1"/>
    <property type="match status" value="1"/>
</dbReference>
<dbReference type="PANTHER" id="PTHR43661">
    <property type="entry name" value="D-XYLONATE DEHYDRATASE"/>
    <property type="match status" value="1"/>
</dbReference>
<dbReference type="PANTHER" id="PTHR43661:SF3">
    <property type="entry name" value="D-XYLONATE DEHYDRATASE YAGF-RELATED"/>
    <property type="match status" value="1"/>
</dbReference>
<dbReference type="Pfam" id="PF24877">
    <property type="entry name" value="ILV_EDD_C"/>
    <property type="match status" value="1"/>
</dbReference>
<dbReference type="Pfam" id="PF00920">
    <property type="entry name" value="ILVD_EDD_N"/>
    <property type="match status" value="1"/>
</dbReference>
<dbReference type="SUPFAM" id="SSF143975">
    <property type="entry name" value="IlvD/EDD N-terminal domain-like"/>
    <property type="match status" value="1"/>
</dbReference>
<dbReference type="SUPFAM" id="SSF52016">
    <property type="entry name" value="LeuD/IlvD-like"/>
    <property type="match status" value="1"/>
</dbReference>
<dbReference type="PROSITE" id="PS00886">
    <property type="entry name" value="ILVD_EDD_1"/>
    <property type="match status" value="1"/>
</dbReference>
<dbReference type="PROSITE" id="PS00887">
    <property type="entry name" value="ILVD_EDD_2"/>
    <property type="match status" value="1"/>
</dbReference>
<protein>
    <recommendedName>
        <fullName evidence="1">Dihydroxy-acid dehydratase 1</fullName>
        <shortName evidence="1">DAD 1</shortName>
        <ecNumber evidence="1">4.2.1.9</ecNumber>
    </recommendedName>
</protein>
<organism>
    <name type="scientific">Bordetella parapertussis (strain 12822 / ATCC BAA-587 / NCTC 13253)</name>
    <dbReference type="NCBI Taxonomy" id="257311"/>
    <lineage>
        <taxon>Bacteria</taxon>
        <taxon>Pseudomonadati</taxon>
        <taxon>Pseudomonadota</taxon>
        <taxon>Betaproteobacteria</taxon>
        <taxon>Burkholderiales</taxon>
        <taxon>Alcaligenaceae</taxon>
        <taxon>Bordetella</taxon>
    </lineage>
</organism>
<proteinExistence type="inferred from homology"/>
<keyword id="KW-0001">2Fe-2S</keyword>
<keyword id="KW-0028">Amino-acid biosynthesis</keyword>
<keyword id="KW-0100">Branched-chain amino acid biosynthesis</keyword>
<keyword id="KW-0408">Iron</keyword>
<keyword id="KW-0411">Iron-sulfur</keyword>
<keyword id="KW-0456">Lyase</keyword>
<keyword id="KW-0460">Magnesium</keyword>
<keyword id="KW-0479">Metal-binding</keyword>
<gene>
    <name evidence="1" type="primary">ilvD1</name>
    <name type="ordered locus">BPP0429</name>
</gene>
<sequence length="619" mass="65522">MPHYRSRTSTHGRNMAGARALWRATGMKDGDFGKPIIAVVNSFTQFVPGHVHLRDLGALVASEIEAAGGVAKEFNTIAVDDGIAMGHGGMLYSLPSRELIADSVEYMVNAHCADAMVCISNCDKITPGMLMAAMRLNIPVVFVSGGPMEAGKITSPVDGKVIAKLDLVDAMIKAADPNVSDAEAEEVERSACPTCGSCSGMFTANSMNCLTEAIGLALPGNGTIVATHAWRKGLFEQAGRLVVELCRRYYEQDDASVLPRSIATKSAFENAMTLDVAMGGSTNTVLHLLAAAQEAGVDFTMSDIDRISRRVPCLCKAAPATDKYHIEDVHRAGGILGILGELGRADLLDLSCGNVHSGTLGEAINQWDINGGAGEAAQKFFRAAPGGIPTTVAFSQDATFLTLDMDRQTGCIRDKAHAYSQDGGLAVLYGNLAEKGCIVKTAGVDESQWVFTGRARVFESQEDAVEGILGDRVQAGDVVIIRYEGPKGGPGMQEMLYPTSYLKSKGLGKTCALFTDGRFSGGSSGLVIGHASPEAAEGGTIGLVEEGDTIEIDIPNRRIHLAVGDTVLAERRAAMQARGEQAWQPVDRERVVSQALRAYAALATSADRGAVRDLSQLKR</sequence>
<comment type="function">
    <text evidence="1">Functions in the biosynthesis of branched-chain amino acids. Catalyzes the dehydration of (2R,3R)-2,3-dihydroxy-3-methylpentanoate (2,3-dihydroxy-3-methylvalerate) into 2-oxo-3-methylpentanoate (2-oxo-3-methylvalerate) and of (2R)-2,3-dihydroxy-3-methylbutanoate (2,3-dihydroxyisovalerate) into 2-oxo-3-methylbutanoate (2-oxoisovalerate), the penultimate precursor to L-isoleucine and L-valine, respectively.</text>
</comment>
<comment type="catalytic activity">
    <reaction evidence="1">
        <text>(2R)-2,3-dihydroxy-3-methylbutanoate = 3-methyl-2-oxobutanoate + H2O</text>
        <dbReference type="Rhea" id="RHEA:24809"/>
        <dbReference type="ChEBI" id="CHEBI:11851"/>
        <dbReference type="ChEBI" id="CHEBI:15377"/>
        <dbReference type="ChEBI" id="CHEBI:49072"/>
        <dbReference type="EC" id="4.2.1.9"/>
    </reaction>
    <physiologicalReaction direction="left-to-right" evidence="1">
        <dbReference type="Rhea" id="RHEA:24810"/>
    </physiologicalReaction>
</comment>
<comment type="catalytic activity">
    <reaction evidence="1">
        <text>(2R,3R)-2,3-dihydroxy-3-methylpentanoate = (S)-3-methyl-2-oxopentanoate + H2O</text>
        <dbReference type="Rhea" id="RHEA:27694"/>
        <dbReference type="ChEBI" id="CHEBI:15377"/>
        <dbReference type="ChEBI" id="CHEBI:35146"/>
        <dbReference type="ChEBI" id="CHEBI:49258"/>
        <dbReference type="EC" id="4.2.1.9"/>
    </reaction>
    <physiologicalReaction direction="left-to-right" evidence="1">
        <dbReference type="Rhea" id="RHEA:27695"/>
    </physiologicalReaction>
</comment>
<comment type="cofactor">
    <cofactor evidence="1">
        <name>[2Fe-2S] cluster</name>
        <dbReference type="ChEBI" id="CHEBI:190135"/>
    </cofactor>
    <text evidence="1">Binds 1 [2Fe-2S] cluster per subunit. This cluster acts as a Lewis acid cofactor.</text>
</comment>
<comment type="cofactor">
    <cofactor evidence="1">
        <name>Mg(2+)</name>
        <dbReference type="ChEBI" id="CHEBI:18420"/>
    </cofactor>
</comment>
<comment type="pathway">
    <text evidence="1">Amino-acid biosynthesis; L-isoleucine biosynthesis; L-isoleucine from 2-oxobutanoate: step 3/4.</text>
</comment>
<comment type="pathway">
    <text evidence="1">Amino-acid biosynthesis; L-valine biosynthesis; L-valine from pyruvate: step 3/4.</text>
</comment>
<comment type="subunit">
    <text evidence="1">Homodimer.</text>
</comment>
<comment type="similarity">
    <text evidence="1">Belongs to the IlvD/Edd family.</text>
</comment>
<accession>Q7WC98</accession>
<name>ILVD1_BORPA</name>
<reference key="1">
    <citation type="journal article" date="2003" name="Nat. Genet.">
        <title>Comparative analysis of the genome sequences of Bordetella pertussis, Bordetella parapertussis and Bordetella bronchiseptica.</title>
        <authorList>
            <person name="Parkhill J."/>
            <person name="Sebaihia M."/>
            <person name="Preston A."/>
            <person name="Murphy L.D."/>
            <person name="Thomson N.R."/>
            <person name="Harris D.E."/>
            <person name="Holden M.T.G."/>
            <person name="Churcher C.M."/>
            <person name="Bentley S.D."/>
            <person name="Mungall K.L."/>
            <person name="Cerdeno-Tarraga A.-M."/>
            <person name="Temple L."/>
            <person name="James K.D."/>
            <person name="Harris B."/>
            <person name="Quail M.A."/>
            <person name="Achtman M."/>
            <person name="Atkin R."/>
            <person name="Baker S."/>
            <person name="Basham D."/>
            <person name="Bason N."/>
            <person name="Cherevach I."/>
            <person name="Chillingworth T."/>
            <person name="Collins M."/>
            <person name="Cronin A."/>
            <person name="Davis P."/>
            <person name="Doggett J."/>
            <person name="Feltwell T."/>
            <person name="Goble A."/>
            <person name="Hamlin N."/>
            <person name="Hauser H."/>
            <person name="Holroyd S."/>
            <person name="Jagels K."/>
            <person name="Leather S."/>
            <person name="Moule S."/>
            <person name="Norberczak H."/>
            <person name="O'Neil S."/>
            <person name="Ormond D."/>
            <person name="Price C."/>
            <person name="Rabbinowitsch E."/>
            <person name="Rutter S."/>
            <person name="Sanders M."/>
            <person name="Saunders D."/>
            <person name="Seeger K."/>
            <person name="Sharp S."/>
            <person name="Simmonds M."/>
            <person name="Skelton J."/>
            <person name="Squares R."/>
            <person name="Squares S."/>
            <person name="Stevens K."/>
            <person name="Unwin L."/>
            <person name="Whitehead S."/>
            <person name="Barrell B.G."/>
            <person name="Maskell D.J."/>
        </authorList>
    </citation>
    <scope>NUCLEOTIDE SEQUENCE [LARGE SCALE GENOMIC DNA]</scope>
    <source>
        <strain>12822 / ATCC BAA-587 / NCTC 13253</strain>
    </source>
</reference>
<evidence type="ECO:0000255" key="1">
    <source>
        <dbReference type="HAMAP-Rule" id="MF_00012"/>
    </source>
</evidence>
<feature type="chain" id="PRO_0000103437" description="Dihydroxy-acid dehydratase 1">
    <location>
        <begin position="1"/>
        <end position="619"/>
    </location>
</feature>
<feature type="active site" description="Proton acceptor" evidence="1">
    <location>
        <position position="520"/>
    </location>
</feature>
<feature type="binding site" evidence="1">
    <location>
        <position position="81"/>
    </location>
    <ligand>
        <name>Mg(2+)</name>
        <dbReference type="ChEBI" id="CHEBI:18420"/>
    </ligand>
</feature>
<feature type="binding site" evidence="1">
    <location>
        <position position="122"/>
    </location>
    <ligand>
        <name>[2Fe-2S] cluster</name>
        <dbReference type="ChEBI" id="CHEBI:190135"/>
    </ligand>
</feature>
<feature type="binding site" evidence="1">
    <location>
        <position position="123"/>
    </location>
    <ligand>
        <name>Mg(2+)</name>
        <dbReference type="ChEBI" id="CHEBI:18420"/>
    </ligand>
</feature>
<feature type="binding site" description="via carbamate group" evidence="1">
    <location>
        <position position="124"/>
    </location>
    <ligand>
        <name>Mg(2+)</name>
        <dbReference type="ChEBI" id="CHEBI:18420"/>
    </ligand>
</feature>
<feature type="binding site" evidence="1">
    <location>
        <position position="198"/>
    </location>
    <ligand>
        <name>[2Fe-2S] cluster</name>
        <dbReference type="ChEBI" id="CHEBI:190135"/>
    </ligand>
</feature>
<feature type="binding site" evidence="1">
    <location>
        <position position="494"/>
    </location>
    <ligand>
        <name>Mg(2+)</name>
        <dbReference type="ChEBI" id="CHEBI:18420"/>
    </ligand>
</feature>
<feature type="modified residue" description="N6-carboxylysine" evidence="1">
    <location>
        <position position="124"/>
    </location>
</feature>